<organism>
    <name type="scientific">Mycobacterium tuberculosis (strain CDC 1551 / Oshkosh)</name>
    <dbReference type="NCBI Taxonomy" id="83331"/>
    <lineage>
        <taxon>Bacteria</taxon>
        <taxon>Bacillati</taxon>
        <taxon>Actinomycetota</taxon>
        <taxon>Actinomycetes</taxon>
        <taxon>Mycobacteriales</taxon>
        <taxon>Mycobacteriaceae</taxon>
        <taxon>Mycobacterium</taxon>
        <taxon>Mycobacterium tuberculosis complex</taxon>
    </lineage>
</organism>
<reference key="1">
    <citation type="journal article" date="2002" name="J. Bacteriol.">
        <title>Whole-genome comparison of Mycobacterium tuberculosis clinical and laboratory strains.</title>
        <authorList>
            <person name="Fleischmann R.D."/>
            <person name="Alland D."/>
            <person name="Eisen J.A."/>
            <person name="Carpenter L."/>
            <person name="White O."/>
            <person name="Peterson J.D."/>
            <person name="DeBoy R.T."/>
            <person name="Dodson R.J."/>
            <person name="Gwinn M.L."/>
            <person name="Haft D.H."/>
            <person name="Hickey E.K."/>
            <person name="Kolonay J.F."/>
            <person name="Nelson W.C."/>
            <person name="Umayam L.A."/>
            <person name="Ermolaeva M.D."/>
            <person name="Salzberg S.L."/>
            <person name="Delcher A."/>
            <person name="Utterback T.R."/>
            <person name="Weidman J.F."/>
            <person name="Khouri H.M."/>
            <person name="Gill J."/>
            <person name="Mikula A."/>
            <person name="Bishai W."/>
            <person name="Jacobs W.R. Jr."/>
            <person name="Venter J.C."/>
            <person name="Fraser C.M."/>
        </authorList>
    </citation>
    <scope>NUCLEOTIDE SEQUENCE [LARGE SCALE GENOMIC DNA]</scope>
    <source>
        <strain>CDC 1551 / Oshkosh</strain>
    </source>
</reference>
<accession>P9WNX0</accession>
<accession>L0TDH5</accession>
<accession>O33305</accession>
<accession>P0A546</accession>
<protein>
    <recommendedName>
        <fullName>Dihydrofolate reductase</fullName>
        <ecNumber>1.5.1.3</ecNumber>
    </recommendedName>
</protein>
<evidence type="ECO:0000250" key="1"/>
<evidence type="ECO:0000255" key="2">
    <source>
        <dbReference type="PROSITE-ProRule" id="PRU00660"/>
    </source>
</evidence>
<evidence type="ECO:0000305" key="3"/>
<keyword id="KW-0521">NADP</keyword>
<keyword id="KW-0554">One-carbon metabolism</keyword>
<keyword id="KW-0560">Oxidoreductase</keyword>
<keyword id="KW-1185">Reference proteome</keyword>
<sequence>MTMVGLIWAQATSGVIGRGGDIPWRLPEDQAHFREITMGHTIVMGRRTWDSLPAKVRPLPGRRNVVLSRQADFMASGAEVVGSLEEALTSPETWVIGGGQVYALALPYATRCEVTEVDIGLPREAGDALAPVLDETWRGETGEWRFSRSGLRYRLYSYHRS</sequence>
<proteinExistence type="inferred from homology"/>
<dbReference type="EC" id="1.5.1.3"/>
<dbReference type="EMBL" id="AE000516">
    <property type="protein sequence ID" value="AAK47152.1"/>
    <property type="status" value="ALT_INIT"/>
    <property type="molecule type" value="Genomic_DNA"/>
</dbReference>
<dbReference type="PIR" id="B70881">
    <property type="entry name" value="B70881"/>
</dbReference>
<dbReference type="SMR" id="P9WNX0"/>
<dbReference type="KEGG" id="mtc:MT2833"/>
<dbReference type="HOGENOM" id="CLU_043966_5_0_11"/>
<dbReference type="UniPathway" id="UPA00077">
    <property type="reaction ID" value="UER00158"/>
</dbReference>
<dbReference type="Proteomes" id="UP000001020">
    <property type="component" value="Chromosome"/>
</dbReference>
<dbReference type="GO" id="GO:0005829">
    <property type="term" value="C:cytosol"/>
    <property type="evidence" value="ECO:0007669"/>
    <property type="project" value="TreeGrafter"/>
</dbReference>
<dbReference type="GO" id="GO:0004146">
    <property type="term" value="F:dihydrofolate reductase activity"/>
    <property type="evidence" value="ECO:0007669"/>
    <property type="project" value="UniProtKB-EC"/>
</dbReference>
<dbReference type="GO" id="GO:0050661">
    <property type="term" value="F:NADP binding"/>
    <property type="evidence" value="ECO:0007669"/>
    <property type="project" value="InterPro"/>
</dbReference>
<dbReference type="GO" id="GO:0046452">
    <property type="term" value="P:dihydrofolate metabolic process"/>
    <property type="evidence" value="ECO:0007669"/>
    <property type="project" value="TreeGrafter"/>
</dbReference>
<dbReference type="GO" id="GO:0046655">
    <property type="term" value="P:folic acid metabolic process"/>
    <property type="evidence" value="ECO:0007669"/>
    <property type="project" value="TreeGrafter"/>
</dbReference>
<dbReference type="GO" id="GO:0006730">
    <property type="term" value="P:one-carbon metabolic process"/>
    <property type="evidence" value="ECO:0007669"/>
    <property type="project" value="UniProtKB-KW"/>
</dbReference>
<dbReference type="GO" id="GO:0046654">
    <property type="term" value="P:tetrahydrofolate biosynthetic process"/>
    <property type="evidence" value="ECO:0007669"/>
    <property type="project" value="UniProtKB-UniPathway"/>
</dbReference>
<dbReference type="CDD" id="cd00209">
    <property type="entry name" value="DHFR"/>
    <property type="match status" value="1"/>
</dbReference>
<dbReference type="FunFam" id="3.40.430.10:FF:000001">
    <property type="entry name" value="Dihydrofolate reductase"/>
    <property type="match status" value="1"/>
</dbReference>
<dbReference type="Gene3D" id="3.40.430.10">
    <property type="entry name" value="Dihydrofolate Reductase, subunit A"/>
    <property type="match status" value="1"/>
</dbReference>
<dbReference type="InterPro" id="IPR012259">
    <property type="entry name" value="DHFR"/>
</dbReference>
<dbReference type="InterPro" id="IPR024072">
    <property type="entry name" value="DHFR-like_dom_sf"/>
</dbReference>
<dbReference type="InterPro" id="IPR017925">
    <property type="entry name" value="DHFR_CS"/>
</dbReference>
<dbReference type="InterPro" id="IPR001796">
    <property type="entry name" value="DHFR_dom"/>
</dbReference>
<dbReference type="PANTHER" id="PTHR48069">
    <property type="entry name" value="DIHYDROFOLATE REDUCTASE"/>
    <property type="match status" value="1"/>
</dbReference>
<dbReference type="PANTHER" id="PTHR48069:SF3">
    <property type="entry name" value="DIHYDROFOLATE REDUCTASE"/>
    <property type="match status" value="1"/>
</dbReference>
<dbReference type="Pfam" id="PF00186">
    <property type="entry name" value="DHFR_1"/>
    <property type="match status" value="1"/>
</dbReference>
<dbReference type="PIRSF" id="PIRSF000194">
    <property type="entry name" value="DHFR"/>
    <property type="match status" value="1"/>
</dbReference>
<dbReference type="PRINTS" id="PR00070">
    <property type="entry name" value="DHFR"/>
</dbReference>
<dbReference type="SUPFAM" id="SSF53597">
    <property type="entry name" value="Dihydrofolate reductase-like"/>
    <property type="match status" value="1"/>
</dbReference>
<dbReference type="PROSITE" id="PS00075">
    <property type="entry name" value="DHFR_1"/>
    <property type="match status" value="1"/>
</dbReference>
<dbReference type="PROSITE" id="PS51330">
    <property type="entry name" value="DHFR_2"/>
    <property type="match status" value="1"/>
</dbReference>
<comment type="function">
    <text evidence="1">Key enzyme in folate metabolism. Catalyzes an essential reaction for de novo glycine and purine synthesis, and for DNA precursor synthesis (By similarity).</text>
</comment>
<comment type="catalytic activity">
    <reaction evidence="2">
        <text>(6S)-5,6,7,8-tetrahydrofolate + NADP(+) = 7,8-dihydrofolate + NADPH + H(+)</text>
        <dbReference type="Rhea" id="RHEA:15009"/>
        <dbReference type="ChEBI" id="CHEBI:15378"/>
        <dbReference type="ChEBI" id="CHEBI:57451"/>
        <dbReference type="ChEBI" id="CHEBI:57453"/>
        <dbReference type="ChEBI" id="CHEBI:57783"/>
        <dbReference type="ChEBI" id="CHEBI:58349"/>
        <dbReference type="EC" id="1.5.1.3"/>
    </reaction>
</comment>
<comment type="pathway">
    <text>Cofactor biosynthesis; tetrahydrofolate biosynthesis; 5,6,7,8-tetrahydrofolate from 7,8-dihydrofolate: step 1/1.</text>
</comment>
<comment type="similarity">
    <text evidence="3">Belongs to the dihydrofolate reductase family.</text>
</comment>
<comment type="sequence caution" evidence="3">
    <conflict type="erroneous initiation">
        <sequence resource="EMBL-CDS" id="AAK47152"/>
    </conflict>
    <text>Truncated N-terminus.</text>
</comment>
<feature type="chain" id="PRO_0000427053" description="Dihydrofolate reductase">
    <location>
        <begin position="1"/>
        <end position="161"/>
    </location>
</feature>
<feature type="domain" description="DHFR" evidence="2">
    <location>
        <begin position="1"/>
        <end position="160"/>
    </location>
</feature>
<feature type="binding site" evidence="1">
    <location>
        <begin position="7"/>
        <end position="9"/>
    </location>
    <ligand>
        <name>substrate</name>
    </ligand>
</feature>
<feature type="binding site" evidence="1">
    <location>
        <begin position="8"/>
        <end position="9"/>
    </location>
    <ligand>
        <name>NADP(+)</name>
        <dbReference type="ChEBI" id="CHEBI:58349"/>
    </ligand>
</feature>
<feature type="binding site" evidence="1">
    <location>
        <begin position="16"/>
        <end position="21"/>
    </location>
    <ligand>
        <name>NADP(+)</name>
        <dbReference type="ChEBI" id="CHEBI:58349"/>
    </ligand>
</feature>
<feature type="binding site" evidence="1">
    <location>
        <position position="29"/>
    </location>
    <ligand>
        <name>substrate</name>
    </ligand>
</feature>
<feature type="binding site" evidence="1">
    <location>
        <position position="34"/>
    </location>
    <ligand>
        <name>substrate</name>
    </ligand>
</feature>
<feature type="binding site" evidence="1">
    <location>
        <begin position="45"/>
        <end position="48"/>
    </location>
    <ligand>
        <name>NADP(+)</name>
        <dbReference type="ChEBI" id="CHEBI:58349"/>
    </ligand>
</feature>
<feature type="binding site" evidence="1">
    <location>
        <position position="62"/>
    </location>
    <ligand>
        <name>substrate</name>
    </ligand>
</feature>
<feature type="binding site" evidence="1">
    <location>
        <begin position="67"/>
        <end position="70"/>
    </location>
    <ligand>
        <name>NADP(+)</name>
        <dbReference type="ChEBI" id="CHEBI:58349"/>
    </ligand>
</feature>
<feature type="binding site" evidence="1">
    <location>
        <position position="82"/>
    </location>
    <ligand>
        <name>NADP(+)</name>
        <dbReference type="ChEBI" id="CHEBI:58349"/>
    </ligand>
</feature>
<feature type="binding site" evidence="1">
    <location>
        <begin position="96"/>
        <end position="101"/>
    </location>
    <ligand>
        <name>NADP(+)</name>
        <dbReference type="ChEBI" id="CHEBI:58349"/>
    </ligand>
</feature>
<feature type="binding site" evidence="1">
    <location>
        <position position="102"/>
    </location>
    <ligand>
        <name>substrate</name>
    </ligand>
</feature>
<feature type="binding site" evidence="1">
    <location>
        <position position="115"/>
    </location>
    <ligand>
        <name>substrate</name>
    </ligand>
</feature>
<name>DYR_MYCTO</name>
<gene>
    <name type="primary">folA</name>
    <name type="synonym">dfrA</name>
    <name type="ordered locus">MT2833</name>
</gene>